<dbReference type="EC" id="2.7.1.23" evidence="1"/>
<dbReference type="EMBL" id="CP000680">
    <property type="protein sequence ID" value="ABP85699.1"/>
    <property type="molecule type" value="Genomic_DNA"/>
</dbReference>
<dbReference type="SMR" id="A4XWI3"/>
<dbReference type="STRING" id="399739.Pmen_2944"/>
<dbReference type="KEGG" id="pmy:Pmen_2944"/>
<dbReference type="PATRIC" id="fig|399739.8.peg.2987"/>
<dbReference type="eggNOG" id="COG0061">
    <property type="taxonomic scope" value="Bacteria"/>
</dbReference>
<dbReference type="HOGENOM" id="CLU_008831_0_1_6"/>
<dbReference type="OrthoDB" id="9774737at2"/>
<dbReference type="GO" id="GO:0005737">
    <property type="term" value="C:cytoplasm"/>
    <property type="evidence" value="ECO:0007669"/>
    <property type="project" value="UniProtKB-SubCell"/>
</dbReference>
<dbReference type="GO" id="GO:0005524">
    <property type="term" value="F:ATP binding"/>
    <property type="evidence" value="ECO:0007669"/>
    <property type="project" value="UniProtKB-KW"/>
</dbReference>
<dbReference type="GO" id="GO:0046872">
    <property type="term" value="F:metal ion binding"/>
    <property type="evidence" value="ECO:0007669"/>
    <property type="project" value="UniProtKB-UniRule"/>
</dbReference>
<dbReference type="GO" id="GO:0051287">
    <property type="term" value="F:NAD binding"/>
    <property type="evidence" value="ECO:0007669"/>
    <property type="project" value="UniProtKB-ARBA"/>
</dbReference>
<dbReference type="GO" id="GO:0003951">
    <property type="term" value="F:NAD+ kinase activity"/>
    <property type="evidence" value="ECO:0007669"/>
    <property type="project" value="UniProtKB-UniRule"/>
</dbReference>
<dbReference type="GO" id="GO:0019674">
    <property type="term" value="P:NAD metabolic process"/>
    <property type="evidence" value="ECO:0007669"/>
    <property type="project" value="InterPro"/>
</dbReference>
<dbReference type="GO" id="GO:0006741">
    <property type="term" value="P:NADP biosynthetic process"/>
    <property type="evidence" value="ECO:0007669"/>
    <property type="project" value="UniProtKB-UniRule"/>
</dbReference>
<dbReference type="FunFam" id="2.60.200.30:FF:000001">
    <property type="entry name" value="NAD kinase"/>
    <property type="match status" value="1"/>
</dbReference>
<dbReference type="Gene3D" id="3.40.50.10330">
    <property type="entry name" value="Probable inorganic polyphosphate/atp-NAD kinase, domain 1"/>
    <property type="match status" value="1"/>
</dbReference>
<dbReference type="Gene3D" id="2.60.200.30">
    <property type="entry name" value="Probable inorganic polyphosphate/atp-NAD kinase, domain 2"/>
    <property type="match status" value="1"/>
</dbReference>
<dbReference type="HAMAP" id="MF_00361">
    <property type="entry name" value="NAD_kinase"/>
    <property type="match status" value="1"/>
</dbReference>
<dbReference type="InterPro" id="IPR017438">
    <property type="entry name" value="ATP-NAD_kinase_N"/>
</dbReference>
<dbReference type="InterPro" id="IPR017437">
    <property type="entry name" value="ATP-NAD_kinase_PpnK-typ_C"/>
</dbReference>
<dbReference type="InterPro" id="IPR016064">
    <property type="entry name" value="NAD/diacylglycerol_kinase_sf"/>
</dbReference>
<dbReference type="InterPro" id="IPR002504">
    <property type="entry name" value="NADK"/>
</dbReference>
<dbReference type="NCBIfam" id="NF002306">
    <property type="entry name" value="PRK01231.1"/>
    <property type="match status" value="1"/>
</dbReference>
<dbReference type="PANTHER" id="PTHR20275">
    <property type="entry name" value="NAD KINASE"/>
    <property type="match status" value="1"/>
</dbReference>
<dbReference type="PANTHER" id="PTHR20275:SF0">
    <property type="entry name" value="NAD KINASE"/>
    <property type="match status" value="1"/>
</dbReference>
<dbReference type="Pfam" id="PF01513">
    <property type="entry name" value="NAD_kinase"/>
    <property type="match status" value="1"/>
</dbReference>
<dbReference type="Pfam" id="PF20143">
    <property type="entry name" value="NAD_kinase_C"/>
    <property type="match status" value="1"/>
</dbReference>
<dbReference type="SUPFAM" id="SSF111331">
    <property type="entry name" value="NAD kinase/diacylglycerol kinase-like"/>
    <property type="match status" value="1"/>
</dbReference>
<feature type="chain" id="PRO_1000005431" description="NAD kinase">
    <location>
        <begin position="1"/>
        <end position="295"/>
    </location>
</feature>
<feature type="active site" description="Proton acceptor" evidence="1">
    <location>
        <position position="72"/>
    </location>
</feature>
<feature type="binding site" evidence="1">
    <location>
        <begin position="72"/>
        <end position="73"/>
    </location>
    <ligand>
        <name>NAD(+)</name>
        <dbReference type="ChEBI" id="CHEBI:57540"/>
    </ligand>
</feature>
<feature type="binding site" evidence="1">
    <location>
        <begin position="146"/>
        <end position="147"/>
    </location>
    <ligand>
        <name>NAD(+)</name>
        <dbReference type="ChEBI" id="CHEBI:57540"/>
    </ligand>
</feature>
<feature type="binding site" evidence="1">
    <location>
        <position position="157"/>
    </location>
    <ligand>
        <name>NAD(+)</name>
        <dbReference type="ChEBI" id="CHEBI:57540"/>
    </ligand>
</feature>
<feature type="binding site" evidence="1">
    <location>
        <position position="174"/>
    </location>
    <ligand>
        <name>NAD(+)</name>
        <dbReference type="ChEBI" id="CHEBI:57540"/>
    </ligand>
</feature>
<feature type="binding site" evidence="1">
    <location>
        <position position="176"/>
    </location>
    <ligand>
        <name>NAD(+)</name>
        <dbReference type="ChEBI" id="CHEBI:57540"/>
    </ligand>
</feature>
<feature type="binding site" evidence="1">
    <location>
        <begin position="187"/>
        <end position="192"/>
    </location>
    <ligand>
        <name>NAD(+)</name>
        <dbReference type="ChEBI" id="CHEBI:57540"/>
    </ligand>
</feature>
<feature type="binding site" evidence="1">
    <location>
        <position position="247"/>
    </location>
    <ligand>
        <name>NAD(+)</name>
        <dbReference type="ChEBI" id="CHEBI:57540"/>
    </ligand>
</feature>
<comment type="function">
    <text evidence="1">Involved in the regulation of the intracellular balance of NAD and NADP, and is a key enzyme in the biosynthesis of NADP. Catalyzes specifically the phosphorylation on 2'-hydroxyl of the adenosine moiety of NAD to yield NADP.</text>
</comment>
<comment type="catalytic activity">
    <reaction evidence="1">
        <text>NAD(+) + ATP = ADP + NADP(+) + H(+)</text>
        <dbReference type="Rhea" id="RHEA:18629"/>
        <dbReference type="ChEBI" id="CHEBI:15378"/>
        <dbReference type="ChEBI" id="CHEBI:30616"/>
        <dbReference type="ChEBI" id="CHEBI:57540"/>
        <dbReference type="ChEBI" id="CHEBI:58349"/>
        <dbReference type="ChEBI" id="CHEBI:456216"/>
        <dbReference type="EC" id="2.7.1.23"/>
    </reaction>
</comment>
<comment type="cofactor">
    <cofactor evidence="1">
        <name>a divalent metal cation</name>
        <dbReference type="ChEBI" id="CHEBI:60240"/>
    </cofactor>
</comment>
<comment type="subcellular location">
    <subcellularLocation>
        <location evidence="1">Cytoplasm</location>
    </subcellularLocation>
</comment>
<comment type="similarity">
    <text evidence="1">Belongs to the NAD kinase family.</text>
</comment>
<keyword id="KW-0067">ATP-binding</keyword>
<keyword id="KW-0963">Cytoplasm</keyword>
<keyword id="KW-0418">Kinase</keyword>
<keyword id="KW-0520">NAD</keyword>
<keyword id="KW-0521">NADP</keyword>
<keyword id="KW-0547">Nucleotide-binding</keyword>
<keyword id="KW-0808">Transferase</keyword>
<organism>
    <name type="scientific">Ectopseudomonas mendocina (strain ymp)</name>
    <name type="common">Pseudomonas mendocina</name>
    <dbReference type="NCBI Taxonomy" id="399739"/>
    <lineage>
        <taxon>Bacteria</taxon>
        <taxon>Pseudomonadati</taxon>
        <taxon>Pseudomonadota</taxon>
        <taxon>Gammaproteobacteria</taxon>
        <taxon>Pseudomonadales</taxon>
        <taxon>Pseudomonadaceae</taxon>
        <taxon>Ectopseudomonas</taxon>
    </lineage>
</organism>
<protein>
    <recommendedName>
        <fullName evidence="1">NAD kinase</fullName>
        <ecNumber evidence="1">2.7.1.23</ecNumber>
    </recommendedName>
    <alternativeName>
        <fullName evidence="1">ATP-dependent NAD kinase</fullName>
    </alternativeName>
</protein>
<proteinExistence type="inferred from homology"/>
<reference key="1">
    <citation type="submission" date="2007-04" db="EMBL/GenBank/DDBJ databases">
        <title>Complete sequence of Pseudomonas mendocina ymp.</title>
        <authorList>
            <consortium name="US DOE Joint Genome Institute"/>
            <person name="Copeland A."/>
            <person name="Lucas S."/>
            <person name="Lapidus A."/>
            <person name="Barry K."/>
            <person name="Glavina del Rio T."/>
            <person name="Dalin E."/>
            <person name="Tice H."/>
            <person name="Pitluck S."/>
            <person name="Kiss H."/>
            <person name="Brettin T."/>
            <person name="Detter J.C."/>
            <person name="Bruce D."/>
            <person name="Han C."/>
            <person name="Schmutz J."/>
            <person name="Larimer F."/>
            <person name="Land M."/>
            <person name="Hauser L."/>
            <person name="Kyrpides N."/>
            <person name="Mikhailova N."/>
            <person name="Hersman L."/>
            <person name="Dubois J."/>
            <person name="Maurice P."/>
            <person name="Richardson P."/>
        </authorList>
    </citation>
    <scope>NUCLEOTIDE SEQUENCE [LARGE SCALE GENOMIC DNA]</scope>
    <source>
        <strain>ymp</strain>
    </source>
</reference>
<name>NADK_ECTM1</name>
<accession>A4XWI3</accession>
<gene>
    <name evidence="1" type="primary">nadK</name>
    <name type="ordered locus">Pmen_2944</name>
</gene>
<evidence type="ECO:0000255" key="1">
    <source>
        <dbReference type="HAMAP-Rule" id="MF_00361"/>
    </source>
</evidence>
<sequence>MEQFRNVGIIGRLGSTRVLETVRRLKRFLIDRHLHVILEDTIADVLPGHGLQTSSRKMLGEVCDLVIVVGGDGSMLGAARALARHKVPVLGINRGSLGFLTDIRPDELELKVAQVLEGQYLTENRFLLEAEVRRQGEAIGQGDALNDVVLHPGKSTRMIEFELYIDGQFVCSQKADGLIVATPTGSTAYALSAGGPIMHPKLDAIVVVPMYPHTLSSRPIVVDGNSELKVVVSPDMTIYPQVSCDGQNHFTCAPGDTLHVAKKAQKLRLIHPLDHNYYEVCRTKLGWGSRLGGHD</sequence>